<keyword id="KW-0249">Electron transport</keyword>
<keyword id="KW-0349">Heme</keyword>
<keyword id="KW-0408">Iron</keyword>
<keyword id="KW-0472">Membrane</keyword>
<keyword id="KW-0479">Metal-binding</keyword>
<keyword id="KW-0496">Mitochondrion</keyword>
<keyword id="KW-0999">Mitochondrion inner membrane</keyword>
<keyword id="KW-0679">Respiratory chain</keyword>
<keyword id="KW-0812">Transmembrane</keyword>
<keyword id="KW-1133">Transmembrane helix</keyword>
<keyword id="KW-0813">Transport</keyword>
<keyword id="KW-0830">Ubiquinone</keyword>
<feature type="chain" id="PRO_0000061002" description="Cytochrome b">
    <location>
        <begin position="1"/>
        <end position="379"/>
    </location>
</feature>
<feature type="transmembrane region" description="Helical" evidence="2">
    <location>
        <begin position="33"/>
        <end position="53"/>
    </location>
</feature>
<feature type="transmembrane region" description="Helical" evidence="2">
    <location>
        <begin position="77"/>
        <end position="98"/>
    </location>
</feature>
<feature type="transmembrane region" description="Helical" evidence="2">
    <location>
        <begin position="113"/>
        <end position="133"/>
    </location>
</feature>
<feature type="transmembrane region" description="Helical" evidence="2">
    <location>
        <begin position="178"/>
        <end position="198"/>
    </location>
</feature>
<feature type="transmembrane region" description="Helical" evidence="2">
    <location>
        <begin position="226"/>
        <end position="246"/>
    </location>
</feature>
<feature type="transmembrane region" description="Helical" evidence="2">
    <location>
        <begin position="288"/>
        <end position="308"/>
    </location>
</feature>
<feature type="transmembrane region" description="Helical" evidence="2">
    <location>
        <begin position="320"/>
        <end position="340"/>
    </location>
</feature>
<feature type="transmembrane region" description="Helical" evidence="2">
    <location>
        <begin position="347"/>
        <end position="367"/>
    </location>
</feature>
<feature type="binding site" description="axial binding residue" evidence="2">
    <location>
        <position position="83"/>
    </location>
    <ligand>
        <name>heme b</name>
        <dbReference type="ChEBI" id="CHEBI:60344"/>
        <label>b562</label>
    </ligand>
    <ligandPart>
        <name>Fe</name>
        <dbReference type="ChEBI" id="CHEBI:18248"/>
    </ligandPart>
</feature>
<feature type="binding site" description="axial binding residue" evidence="2">
    <location>
        <position position="97"/>
    </location>
    <ligand>
        <name>heme b</name>
        <dbReference type="ChEBI" id="CHEBI:60344"/>
        <label>b566</label>
    </ligand>
    <ligandPart>
        <name>Fe</name>
        <dbReference type="ChEBI" id="CHEBI:18248"/>
    </ligandPart>
</feature>
<feature type="binding site" description="axial binding residue" evidence="2">
    <location>
        <position position="182"/>
    </location>
    <ligand>
        <name>heme b</name>
        <dbReference type="ChEBI" id="CHEBI:60344"/>
        <label>b562</label>
    </ligand>
    <ligandPart>
        <name>Fe</name>
        <dbReference type="ChEBI" id="CHEBI:18248"/>
    </ligandPart>
</feature>
<feature type="binding site" description="axial binding residue" evidence="2">
    <location>
        <position position="196"/>
    </location>
    <ligand>
        <name>heme b</name>
        <dbReference type="ChEBI" id="CHEBI:60344"/>
        <label>b566</label>
    </ligand>
    <ligandPart>
        <name>Fe</name>
        <dbReference type="ChEBI" id="CHEBI:18248"/>
    </ligandPart>
</feature>
<feature type="binding site" evidence="2">
    <location>
        <position position="201"/>
    </location>
    <ligand>
        <name>a ubiquinone</name>
        <dbReference type="ChEBI" id="CHEBI:16389"/>
    </ligand>
</feature>
<geneLocation type="mitochondrion"/>
<comment type="function">
    <text evidence="2">Component of the ubiquinol-cytochrome c reductase complex (complex III or cytochrome b-c1 complex) that is part of the mitochondrial respiratory chain. The b-c1 complex mediates electron transfer from ubiquinol to cytochrome c. Contributes to the generation of a proton gradient across the mitochondrial membrane that is then used for ATP synthesis.</text>
</comment>
<comment type="cofactor">
    <cofactor evidence="2">
        <name>heme b</name>
        <dbReference type="ChEBI" id="CHEBI:60344"/>
    </cofactor>
    <text evidence="2">Binds 2 heme b groups non-covalently.</text>
</comment>
<comment type="subunit">
    <text evidence="2">The cytochrome bc1 complex contains 11 subunits: 3 respiratory subunits (MT-CYB, CYC1 and UQCRFS1), 2 core proteins (UQCRC1 and UQCRC2) and 6 low-molecular weight proteins (UQCRH/QCR6, UQCRB/QCR7, UQCRQ/QCR8, UQCR10/QCR9, UQCR11/QCR10 and a cleavage product of UQCRFS1). This cytochrome bc1 complex then forms a dimer.</text>
</comment>
<comment type="subcellular location">
    <subcellularLocation>
        <location evidence="2">Mitochondrion inner membrane</location>
        <topology evidence="2">Multi-pass membrane protein</topology>
    </subcellularLocation>
</comment>
<comment type="miscellaneous">
    <text evidence="1">Heme 1 (or BL or b562) is low-potential and absorbs at about 562 nm, and heme 2 (or BH or b566) is high-potential and absorbs at about 566 nm.</text>
</comment>
<comment type="similarity">
    <text evidence="3 4">Belongs to the cytochrome b family.</text>
</comment>
<comment type="caution">
    <text evidence="2">The full-length protein contains only eight transmembrane helices, not nine as predicted by bioinformatics tools.</text>
</comment>
<protein>
    <recommendedName>
        <fullName>Cytochrome b</fullName>
    </recommendedName>
    <alternativeName>
        <fullName>Complex III subunit 3</fullName>
    </alternativeName>
    <alternativeName>
        <fullName>Complex III subunit III</fullName>
    </alternativeName>
    <alternativeName>
        <fullName>Cytochrome b-c1 complex subunit 3</fullName>
    </alternativeName>
    <alternativeName>
        <fullName>Ubiquinol-cytochrome-c reductase complex cytochrome b subunit</fullName>
    </alternativeName>
</protein>
<dbReference type="EMBL" id="AF030390">
    <property type="protein sequence ID" value="AAB94885.1"/>
    <property type="molecule type" value="Genomic_DNA"/>
</dbReference>
<dbReference type="EMBL" id="AF030389">
    <property type="protein sequence ID" value="AAB94884.1"/>
    <property type="molecule type" value="Genomic_DNA"/>
</dbReference>
<dbReference type="SMR" id="O48372"/>
<dbReference type="GO" id="GO:0005743">
    <property type="term" value="C:mitochondrial inner membrane"/>
    <property type="evidence" value="ECO:0007669"/>
    <property type="project" value="UniProtKB-SubCell"/>
</dbReference>
<dbReference type="GO" id="GO:0045275">
    <property type="term" value="C:respiratory chain complex III"/>
    <property type="evidence" value="ECO:0007669"/>
    <property type="project" value="InterPro"/>
</dbReference>
<dbReference type="GO" id="GO:0046872">
    <property type="term" value="F:metal ion binding"/>
    <property type="evidence" value="ECO:0007669"/>
    <property type="project" value="UniProtKB-KW"/>
</dbReference>
<dbReference type="GO" id="GO:0008121">
    <property type="term" value="F:ubiquinol-cytochrome-c reductase activity"/>
    <property type="evidence" value="ECO:0007669"/>
    <property type="project" value="InterPro"/>
</dbReference>
<dbReference type="GO" id="GO:0006122">
    <property type="term" value="P:mitochondrial electron transport, ubiquinol to cytochrome c"/>
    <property type="evidence" value="ECO:0007669"/>
    <property type="project" value="TreeGrafter"/>
</dbReference>
<dbReference type="CDD" id="cd00290">
    <property type="entry name" value="cytochrome_b_C"/>
    <property type="match status" value="1"/>
</dbReference>
<dbReference type="CDD" id="cd00284">
    <property type="entry name" value="Cytochrome_b_N"/>
    <property type="match status" value="1"/>
</dbReference>
<dbReference type="FunFam" id="1.20.810.10:FF:000002">
    <property type="entry name" value="Cytochrome b"/>
    <property type="match status" value="1"/>
</dbReference>
<dbReference type="Gene3D" id="1.20.810.10">
    <property type="entry name" value="Cytochrome Bc1 Complex, Chain C"/>
    <property type="match status" value="1"/>
</dbReference>
<dbReference type="InterPro" id="IPR005798">
    <property type="entry name" value="Cyt_b/b6_C"/>
</dbReference>
<dbReference type="InterPro" id="IPR036150">
    <property type="entry name" value="Cyt_b/b6_C_sf"/>
</dbReference>
<dbReference type="InterPro" id="IPR005797">
    <property type="entry name" value="Cyt_b/b6_N"/>
</dbReference>
<dbReference type="InterPro" id="IPR027387">
    <property type="entry name" value="Cytb/b6-like_sf"/>
</dbReference>
<dbReference type="InterPro" id="IPR030689">
    <property type="entry name" value="Cytochrome_b"/>
</dbReference>
<dbReference type="InterPro" id="IPR048260">
    <property type="entry name" value="Cytochrome_b_C_euk/bac"/>
</dbReference>
<dbReference type="InterPro" id="IPR048259">
    <property type="entry name" value="Cytochrome_b_N_euk/bac"/>
</dbReference>
<dbReference type="InterPro" id="IPR016174">
    <property type="entry name" value="Di-haem_cyt_TM"/>
</dbReference>
<dbReference type="PANTHER" id="PTHR19271">
    <property type="entry name" value="CYTOCHROME B"/>
    <property type="match status" value="1"/>
</dbReference>
<dbReference type="PANTHER" id="PTHR19271:SF16">
    <property type="entry name" value="CYTOCHROME B"/>
    <property type="match status" value="1"/>
</dbReference>
<dbReference type="Pfam" id="PF00032">
    <property type="entry name" value="Cytochrom_B_C"/>
    <property type="match status" value="1"/>
</dbReference>
<dbReference type="Pfam" id="PF00033">
    <property type="entry name" value="Cytochrome_B"/>
    <property type="match status" value="1"/>
</dbReference>
<dbReference type="PIRSF" id="PIRSF038885">
    <property type="entry name" value="COB"/>
    <property type="match status" value="1"/>
</dbReference>
<dbReference type="SUPFAM" id="SSF81648">
    <property type="entry name" value="a domain/subunit of cytochrome bc1 complex (Ubiquinol-cytochrome c reductase)"/>
    <property type="match status" value="1"/>
</dbReference>
<dbReference type="SUPFAM" id="SSF81342">
    <property type="entry name" value="Transmembrane di-heme cytochromes"/>
    <property type="match status" value="1"/>
</dbReference>
<dbReference type="PROSITE" id="PS51003">
    <property type="entry name" value="CYTB_CTER"/>
    <property type="match status" value="1"/>
</dbReference>
<dbReference type="PROSITE" id="PS51002">
    <property type="entry name" value="CYTB_NTER"/>
    <property type="match status" value="1"/>
</dbReference>
<gene>
    <name type="primary">MT-CYB</name>
    <name type="synonym">COB</name>
    <name type="synonym">CYTB</name>
    <name type="synonym">MTCYB</name>
</gene>
<name>CYB_GLASA</name>
<accession>O48372</accession>
<organism>
    <name type="scientific">Glaucomys sabrinus</name>
    <name type="common">Northern flying squirrel</name>
    <name type="synonym">Sciurus sabrinus</name>
    <dbReference type="NCBI Taxonomy" id="45482"/>
    <lineage>
        <taxon>Eukaryota</taxon>
        <taxon>Metazoa</taxon>
        <taxon>Chordata</taxon>
        <taxon>Craniata</taxon>
        <taxon>Vertebrata</taxon>
        <taxon>Euteleostomi</taxon>
        <taxon>Mammalia</taxon>
        <taxon>Eutheria</taxon>
        <taxon>Euarchontoglires</taxon>
        <taxon>Glires</taxon>
        <taxon>Rodentia</taxon>
        <taxon>Sciuromorpha</taxon>
        <taxon>Sciuridae</taxon>
        <taxon>Sciurinae</taxon>
        <taxon>Pteromyini</taxon>
        <taxon>Glaucomys</taxon>
    </lineage>
</organism>
<evidence type="ECO:0000250" key="1"/>
<evidence type="ECO:0000250" key="2">
    <source>
        <dbReference type="UniProtKB" id="P00157"/>
    </source>
</evidence>
<evidence type="ECO:0000255" key="3">
    <source>
        <dbReference type="PROSITE-ProRule" id="PRU00967"/>
    </source>
</evidence>
<evidence type="ECO:0000255" key="4">
    <source>
        <dbReference type="PROSITE-ProRule" id="PRU00968"/>
    </source>
</evidence>
<sequence length="379" mass="43043">MTNIRKTHPLIKIVNHSFIDLPTPSNISAWWNFGSLLGLCLIVQIVTGLFLAMHYTSDTMTAFSSVTHICRDVNYGWLIRYMHANGASMFFICLFLHVGRGLYYGSYTYFETWNIGVILLFTVMATAFMGYVLPWGQMSFWGATVITNLLSAIPYIGTTLVEWIWGGFSVDKATLTRFFAFHFVLPFIIAALAMVHLLFLHETGSNNPSGLISDSDKIPFHPYFSIKDTLGFLILILIFMTLVLFTPDLLGDPDNYTPANPLNTPPHIKPEWYFLFAYAILRSIPNKLGGVLALLFSILILMLFPILHMSKQRSMMFRPLSQCLFWILVADLFTLTWIGGQPVEYPFITIGQVASILYFSIILILLPFASLLENKLLKW</sequence>
<proteinExistence type="inferred from homology"/>
<reference key="1">
    <citation type="journal article" date="1998" name="Can. J. Zool.">
        <title>Endemism in the Alexander archipelago: an assessment of genetic variation in flying squirrels (Rodentia: Glaucomys sabrinus).</title>
        <authorList>
            <person name="Demboski J.R."/>
            <person name="Jacobsen B.K."/>
            <person name="Cook J.A."/>
        </authorList>
    </citation>
    <scope>NUCLEOTIDE SEQUENCE [GENOMIC DNA]</scope>
    <source>
        <strain>Isolate AF 15854</strain>
        <strain>Isolate AF 5451</strain>
    </source>
</reference>